<keyword id="KW-0903">Direct protein sequencing</keyword>
<keyword id="KW-0687">Ribonucleoprotein</keyword>
<keyword id="KW-0689">Ribosomal protein</keyword>
<feature type="chain" id="PRO_0000223463" description="Large ribosomal subunit protein bL33">
    <location>
        <begin position="1"/>
        <end position="18" status="greater than"/>
    </location>
</feature>
<feature type="non-terminal residue" evidence="2">
    <location>
        <position position="18"/>
    </location>
</feature>
<proteinExistence type="evidence at protein level"/>
<sequence>MRELIRLVSSAGTGHFYT</sequence>
<name>RL33_ECTME</name>
<evidence type="ECO:0000255" key="1"/>
<evidence type="ECO:0000303" key="2">
    <source>
    </source>
</evidence>
<evidence type="ECO:0000305" key="3"/>
<comment type="similarity">
    <text evidence="1">Belongs to the bacterial ribosomal protein bL33 family.</text>
</comment>
<reference evidence="3" key="1">
    <citation type="journal article" date="1995" name="Int. J. Syst. Bacteriol.">
        <title>Comparative ribosomal protein sequence analyses of a phylogenetically defined genus, Pseudomonas, and its relatives.</title>
        <authorList>
            <person name="Ochi K."/>
        </authorList>
    </citation>
    <scope>PROTEIN SEQUENCE</scope>
    <source>
        <strain>ATCC 25411 / DSM 50017 / CCUG 1781 / CIP 75.21 / JCM 5966 / NBRC 14162 / NCTC 10897 / NCIMB 10541 / VKM B-972</strain>
    </source>
</reference>
<gene>
    <name type="primary">rpmG</name>
</gene>
<dbReference type="STRING" id="1001585.MDS_4703"/>
<dbReference type="GO" id="GO:1990904">
    <property type="term" value="C:ribonucleoprotein complex"/>
    <property type="evidence" value="ECO:0007669"/>
    <property type="project" value="UniProtKB-KW"/>
</dbReference>
<dbReference type="GO" id="GO:0005840">
    <property type="term" value="C:ribosome"/>
    <property type="evidence" value="ECO:0007669"/>
    <property type="project" value="UniProtKB-KW"/>
</dbReference>
<dbReference type="Gene3D" id="2.20.28.120">
    <property type="entry name" value="Ribosomal protein L33"/>
    <property type="match status" value="1"/>
</dbReference>
<dbReference type="InterPro" id="IPR038584">
    <property type="entry name" value="Ribosomal_bL33_sf"/>
</dbReference>
<protein>
    <recommendedName>
        <fullName evidence="3">Large ribosomal subunit protein bL33</fullName>
    </recommendedName>
    <alternativeName>
        <fullName>50S ribosomal protein L33</fullName>
    </alternativeName>
</protein>
<organism>
    <name type="scientific">Ectopseudomonas mendocina</name>
    <name type="common">Pseudomonas mendocina</name>
    <dbReference type="NCBI Taxonomy" id="300"/>
    <lineage>
        <taxon>Bacteria</taxon>
        <taxon>Pseudomonadati</taxon>
        <taxon>Pseudomonadota</taxon>
        <taxon>Gammaproteobacteria</taxon>
        <taxon>Pseudomonadales</taxon>
        <taxon>Pseudomonadaceae</taxon>
        <taxon>Ectopseudomonas</taxon>
    </lineage>
</organism>
<accession>P84764</accession>
<accession>Q9R334</accession>